<keyword id="KW-0961">Cell wall biogenesis/degradation</keyword>
<keyword id="KW-0963">Cytoplasm</keyword>
<keyword id="KW-0596">Phosphopantetheine</keyword>
<keyword id="KW-0597">Phosphoprotein</keyword>
<comment type="function">
    <text evidence="1">Carrier protein involved in the D-alanylation of lipoteichoic acid (LTA). The loading of thioester-linked D-alanine onto DltC is catalyzed by D-alanine--D-alanyl carrier protein ligase DltA. The DltC-carried D-alanyl group is further transferred to cell membrane phosphatidylglycerol (PG) by forming an ester bond, probably catalyzed by DltD. D-alanylation of LTA plays an important role in modulating the properties of the cell wall in Gram-positive bacteria, influencing the net charge of the cell wall.</text>
</comment>
<comment type="pathway">
    <text evidence="1">Cell wall biogenesis; lipoteichoic acid biosynthesis.</text>
</comment>
<comment type="subcellular location">
    <subcellularLocation>
        <location evidence="1">Cytoplasm</location>
    </subcellularLocation>
</comment>
<comment type="PTM">
    <text evidence="1">4'-phosphopantetheine is transferred from CoA to a specific serine of apo-DCP.</text>
</comment>
<comment type="similarity">
    <text evidence="1">Belongs to the DltC family.</text>
</comment>
<protein>
    <recommendedName>
        <fullName evidence="1">D-alanyl carrier protein</fullName>
        <shortName evidence="1">DCP</shortName>
    </recommendedName>
    <alternativeName>
        <fullName evidence="1">D-alanine--poly(phosphoribitol) ligase subunit 2</fullName>
    </alternativeName>
</protein>
<accession>B9IUW0</accession>
<proteinExistence type="inferred from homology"/>
<name>DLTC_BACCQ</name>
<gene>
    <name evidence="1" type="primary">dltC</name>
    <name type="ordered locus">BCQ_1443</name>
</gene>
<dbReference type="EMBL" id="CP000227">
    <property type="protein sequence ID" value="ACM11871.1"/>
    <property type="molecule type" value="Genomic_DNA"/>
</dbReference>
<dbReference type="SMR" id="B9IUW0"/>
<dbReference type="KEGG" id="bcq:BCQ_1443"/>
<dbReference type="HOGENOM" id="CLU_108696_19_0_9"/>
<dbReference type="UniPathway" id="UPA00556"/>
<dbReference type="Proteomes" id="UP000000441">
    <property type="component" value="Chromosome"/>
</dbReference>
<dbReference type="GO" id="GO:0005737">
    <property type="term" value="C:cytoplasm"/>
    <property type="evidence" value="ECO:0007669"/>
    <property type="project" value="UniProtKB-SubCell"/>
</dbReference>
<dbReference type="GO" id="GO:0036370">
    <property type="term" value="F:D-alanyl carrier activity"/>
    <property type="evidence" value="ECO:0007669"/>
    <property type="project" value="UniProtKB-UniRule"/>
</dbReference>
<dbReference type="GO" id="GO:0071555">
    <property type="term" value="P:cell wall organization"/>
    <property type="evidence" value="ECO:0007669"/>
    <property type="project" value="UniProtKB-KW"/>
</dbReference>
<dbReference type="GO" id="GO:0070395">
    <property type="term" value="P:lipoteichoic acid biosynthetic process"/>
    <property type="evidence" value="ECO:0007669"/>
    <property type="project" value="UniProtKB-UniRule"/>
</dbReference>
<dbReference type="FunFam" id="1.10.1200.10:FF:000004">
    <property type="entry name" value="D-alanyl carrier protein"/>
    <property type="match status" value="1"/>
</dbReference>
<dbReference type="Gene3D" id="1.10.1200.10">
    <property type="entry name" value="ACP-like"/>
    <property type="match status" value="1"/>
</dbReference>
<dbReference type="HAMAP" id="MF_00565">
    <property type="entry name" value="DltC"/>
    <property type="match status" value="1"/>
</dbReference>
<dbReference type="InterPro" id="IPR036736">
    <property type="entry name" value="ACP-like_sf"/>
</dbReference>
<dbReference type="InterPro" id="IPR003230">
    <property type="entry name" value="DltC"/>
</dbReference>
<dbReference type="InterPro" id="IPR009081">
    <property type="entry name" value="PP-bd_ACP"/>
</dbReference>
<dbReference type="NCBIfam" id="TIGR01688">
    <property type="entry name" value="dltC"/>
    <property type="match status" value="1"/>
</dbReference>
<dbReference type="NCBIfam" id="NF003464">
    <property type="entry name" value="PRK05087.1"/>
    <property type="match status" value="1"/>
</dbReference>
<dbReference type="Pfam" id="PF00550">
    <property type="entry name" value="PP-binding"/>
    <property type="match status" value="1"/>
</dbReference>
<dbReference type="SUPFAM" id="SSF47336">
    <property type="entry name" value="ACP-like"/>
    <property type="match status" value="1"/>
</dbReference>
<dbReference type="PROSITE" id="PS50075">
    <property type="entry name" value="CARRIER"/>
    <property type="match status" value="1"/>
</dbReference>
<evidence type="ECO:0000255" key="1">
    <source>
        <dbReference type="HAMAP-Rule" id="MF_00565"/>
    </source>
</evidence>
<reference key="1">
    <citation type="journal article" date="2009" name="J. Bacteriol.">
        <title>Complete genome sequence of the extremophilic Bacillus cereus strain Q1 with industrial applications.</title>
        <authorList>
            <person name="Xiong Z."/>
            <person name="Jiang Y."/>
            <person name="Qi D."/>
            <person name="Lu H."/>
            <person name="Yang F."/>
            <person name="Yang J."/>
            <person name="Chen L."/>
            <person name="Sun L."/>
            <person name="Xu X."/>
            <person name="Xue Y."/>
            <person name="Zhu Y."/>
            <person name="Jin Q."/>
        </authorList>
    </citation>
    <scope>NUCLEOTIDE SEQUENCE [LARGE SCALE GENOMIC DNA]</scope>
    <source>
        <strain>Q1</strain>
    </source>
</reference>
<sequence length="79" mass="9261">MAEFKEQVLDILEEVCENDIVKENLDVQLFEEGILDSFAVVSLLVEFQERLDIEVSISDFDRDEWATPNMVIKKLEEIR</sequence>
<feature type="chain" id="PRO_1000146793" description="D-alanyl carrier protein">
    <location>
        <begin position="1"/>
        <end position="79"/>
    </location>
</feature>
<feature type="domain" description="Carrier" evidence="1">
    <location>
        <begin position="2"/>
        <end position="79"/>
    </location>
</feature>
<feature type="modified residue" description="O-(pantetheine 4'-phosphoryl)serine" evidence="1">
    <location>
        <position position="37"/>
    </location>
</feature>
<organism>
    <name type="scientific">Bacillus cereus (strain Q1)</name>
    <dbReference type="NCBI Taxonomy" id="361100"/>
    <lineage>
        <taxon>Bacteria</taxon>
        <taxon>Bacillati</taxon>
        <taxon>Bacillota</taxon>
        <taxon>Bacilli</taxon>
        <taxon>Bacillales</taxon>
        <taxon>Bacillaceae</taxon>
        <taxon>Bacillus</taxon>
        <taxon>Bacillus cereus group</taxon>
    </lineage>
</organism>